<organism>
    <name type="scientific">Chlamydia trachomatis serovar D (strain ATCC VR-885 / DSM 19411 / UW-3/Cx)</name>
    <dbReference type="NCBI Taxonomy" id="272561"/>
    <lineage>
        <taxon>Bacteria</taxon>
        <taxon>Pseudomonadati</taxon>
        <taxon>Chlamydiota</taxon>
        <taxon>Chlamydiia</taxon>
        <taxon>Chlamydiales</taxon>
        <taxon>Chlamydiaceae</taxon>
        <taxon>Chlamydia/Chlamydophila group</taxon>
        <taxon>Chlamydia</taxon>
    </lineage>
</organism>
<accession>O84462</accession>
<reference key="1">
    <citation type="journal article" date="1998" name="Science">
        <title>Genome sequence of an obligate intracellular pathogen of humans: Chlamydia trachomatis.</title>
        <authorList>
            <person name="Stephens R.S."/>
            <person name="Kalman S."/>
            <person name="Lammel C.J."/>
            <person name="Fan J."/>
            <person name="Marathe R."/>
            <person name="Aravind L."/>
            <person name="Mitchell W.P."/>
            <person name="Olinger L."/>
            <person name="Tatusov R.L."/>
            <person name="Zhao Q."/>
            <person name="Koonin E.V."/>
            <person name="Davis R.W."/>
        </authorList>
    </citation>
    <scope>NUCLEOTIDE SEQUENCE [LARGE SCALE GENOMIC DNA]</scope>
    <source>
        <strain>ATCC VR-885 / DSM 19411 / UW-3/Cx</strain>
    </source>
</reference>
<proteinExistence type="inferred from homology"/>
<dbReference type="EMBL" id="AE001273">
    <property type="protein sequence ID" value="AAC68056.1"/>
    <property type="molecule type" value="Genomic_DNA"/>
</dbReference>
<dbReference type="PIR" id="C71513">
    <property type="entry name" value="C71513"/>
</dbReference>
<dbReference type="RefSeq" id="NP_219969.1">
    <property type="nucleotide sequence ID" value="NC_000117.1"/>
</dbReference>
<dbReference type="RefSeq" id="WP_010725202.1">
    <property type="nucleotide sequence ID" value="NC_000117.1"/>
</dbReference>
<dbReference type="STRING" id="272561.CT_456"/>
<dbReference type="EnsemblBacteria" id="AAC68056">
    <property type="protein sequence ID" value="AAC68056"/>
    <property type="gene ID" value="CT_456"/>
</dbReference>
<dbReference type="GeneID" id="884231"/>
<dbReference type="KEGG" id="ctr:CT_456"/>
<dbReference type="PATRIC" id="fig|272561.5.peg.493"/>
<dbReference type="HOGENOM" id="CLU_011849_0_0_0"/>
<dbReference type="InParanoid" id="O84462"/>
<dbReference type="OrthoDB" id="16908at2"/>
<dbReference type="Proteomes" id="UP000000431">
    <property type="component" value="Chromosome"/>
</dbReference>
<dbReference type="GO" id="GO:0005576">
    <property type="term" value="C:extracellular region"/>
    <property type="evidence" value="ECO:0007669"/>
    <property type="project" value="UniProtKB-SubCell"/>
</dbReference>
<dbReference type="GO" id="GO:0042169">
    <property type="term" value="F:SH2 domain binding"/>
    <property type="evidence" value="ECO:0000353"/>
    <property type="project" value="CAFA"/>
</dbReference>
<dbReference type="InterPro" id="IPR053108">
    <property type="entry name" value="Chlamydial_TARP"/>
</dbReference>
<dbReference type="InterPro" id="IPR011443">
    <property type="entry name" value="DUF1547"/>
</dbReference>
<dbReference type="NCBIfam" id="NF033567">
    <property type="entry name" value="act_recrut_TARP"/>
    <property type="match status" value="1"/>
</dbReference>
<dbReference type="PANTHER" id="PTHR36975">
    <property type="match status" value="1"/>
</dbReference>
<dbReference type="PANTHER" id="PTHR36975:SF5">
    <property type="entry name" value="TRANSLOCATED ACTIN-RECRUITING PHOSPHOPROTEIN"/>
    <property type="match status" value="1"/>
</dbReference>
<dbReference type="Pfam" id="PF07577">
    <property type="entry name" value="DUF1547"/>
    <property type="match status" value="3"/>
</dbReference>
<evidence type="ECO:0000250" key="1"/>
<evidence type="ECO:0000256" key="2">
    <source>
        <dbReference type="SAM" id="MobiDB-lite"/>
    </source>
</evidence>
<evidence type="ECO:0000305" key="3"/>
<keyword id="KW-0597">Phosphoprotein</keyword>
<keyword id="KW-1185">Reference proteome</keyword>
<keyword id="KW-0964">Secreted</keyword>
<keyword id="KW-0843">Virulence</keyword>
<feature type="chain" id="PRO_0000072435" description="Translocated actin-recruiting phosphoprotein">
    <location>
        <begin position="1"/>
        <end position="1005"/>
    </location>
</feature>
<feature type="region of interest" description="Disordered" evidence="2">
    <location>
        <begin position="1"/>
        <end position="36"/>
    </location>
</feature>
<feature type="region of interest" description="Disordered" evidence="2">
    <location>
        <begin position="73"/>
        <end position="155"/>
    </location>
</feature>
<feature type="region of interest" description="Disordered" evidence="2">
    <location>
        <begin position="487"/>
        <end position="521"/>
    </location>
</feature>
<feature type="region of interest" description="Disordered" evidence="2">
    <location>
        <begin position="542"/>
        <end position="626"/>
    </location>
</feature>
<feature type="region of interest" description="Disordered" evidence="2">
    <location>
        <begin position="671"/>
        <end position="749"/>
    </location>
</feature>
<feature type="region of interest" description="Disordered" evidence="2">
    <location>
        <begin position="792"/>
        <end position="847"/>
    </location>
</feature>
<feature type="compositionally biased region" description="Polar residues" evidence="2">
    <location>
        <begin position="1"/>
        <end position="10"/>
    </location>
</feature>
<feature type="compositionally biased region" description="Low complexity" evidence="2">
    <location>
        <begin position="11"/>
        <end position="36"/>
    </location>
</feature>
<feature type="compositionally biased region" description="Low complexity" evidence="2">
    <location>
        <begin position="73"/>
        <end position="121"/>
    </location>
</feature>
<feature type="compositionally biased region" description="Polar residues" evidence="2">
    <location>
        <begin position="130"/>
        <end position="154"/>
    </location>
</feature>
<feature type="compositionally biased region" description="Low complexity" evidence="2">
    <location>
        <begin position="542"/>
        <end position="578"/>
    </location>
</feature>
<feature type="compositionally biased region" description="Low complexity" evidence="2">
    <location>
        <begin position="593"/>
        <end position="612"/>
    </location>
</feature>
<feature type="compositionally biased region" description="Low complexity" evidence="2">
    <location>
        <begin position="720"/>
        <end position="736"/>
    </location>
</feature>
<feature type="compositionally biased region" description="Low complexity" evidence="2">
    <location>
        <begin position="831"/>
        <end position="846"/>
    </location>
</feature>
<gene>
    <name type="primary">tarP</name>
    <name type="ordered locus">CT_456</name>
</gene>
<comment type="function">
    <text evidence="1">Appears to initiate or participate in signaling events that regulate the actin recruitment, which ultimately leads to internalization.</text>
</comment>
<comment type="subcellular location">
    <subcellularLocation>
        <location>Secreted</location>
    </subcellularLocation>
    <text evidence="1">Secreted via type III secretion system and translocated into host cell.</text>
</comment>
<comment type="PTM">
    <text evidence="1">Phosphorylated on a tyrosine on attachment to the host cell. Tyrosine phosphorylation is temporally and spatially associated with recruitment of actin to the site of chlamydial entry. Phosphorylated Tarp seems to remain cytoplasmically exposed on the inclusion membrane at one side of internalized elementary bodies for several hours after entry (By similarity).</text>
</comment>
<comment type="similarity">
    <text evidence="3">Belongs to the chlamydial CPn_0572/CT_456/TC_0741 family.</text>
</comment>
<name>TARP_CHLTR</name>
<sequence length="1005" mass="102132">MTNSISGYQPTVTTSTSSTTSASGASGSLGASSVSTTANATVTQTANATNSAATSSIQTTGETVVNYTNSASAPNVTVSTSSSSTQATATSNKTSQAVAGKITSPDTSESSETSSTSSSDHIPSDYDDVGSNSGDISNNYDDVGSNNGDISSNYDDAAADYEPIRTTENIYESIGGSRTSGPENTSGGAAAALNSLRGSSYSNYDDAAADYEPIRTTENIYESIGGSRTSGPENTSGGAAAALNSLRGSSYSNYDDAAADYEPIRTTENIYESIGGSRTSGPENTSDGAAAAALNSLRGSSYTTGPRNEGVFGPGPEGLPDMSLPSYDPTNKTSLLTFLSNPHVKSKMLENSGHFVFIDTDRSSFILVPNGNWDQVCSIKVQNGKTKEDLDIKDLENMCAKFCTGFSKFSGDWDSLVEPMVSAKAGVASGGNLPNTVIINNKFKTCVAYGPWNSQEASSGYTPSAWRRGHRVDFGGIFEKANDFNKINWGTQAGPSSEDDGISFSNETPGAGPAAAPSPTPSSIPIINVNVNVGGTNVNIGDTNVNTTNTTPTTQSTDASTDTSDIDDINTNNQTDDINTTDKDSDGAGGVNGDISETESSSGDDSGSVSSSESDKNASVGNDGPAMKDILSAVRKHLDVVYPGENGGSTEGPLPANQTLGDVISDVENKGSAQDTKLSGNTGAGDDDPTTTAAVGNGAEEITLSDTDSGIGDDVSDTASSSGDESGGVSSPSSESNKNTAVGNDGPSGLDILAAVRKHLDKVYPGDNGGSTEGPLQANQTLGDIVQDMETTGTSQETVVSPWKGSTSSTESAGGSGSVQTLLPSPPPTPSTTTLRTGTGATTTSLMMGGPIKADIITTGGGGRIPGGGTLEKLLPRIRAHLDISFDAQGDLVSTEEPQLGSIVNKFRQETGSRGILAFVESAPGKPGSAQVLTGTGGDKGNLFQAAAAVTQALGNVAGKVNLAIQGQKLSSLVNDDGKGSVGRDLFQAAAQTTQVLSALIDTVG</sequence>
<protein>
    <recommendedName>
        <fullName>Translocated actin-recruiting phosphoprotein</fullName>
        <shortName>Tarp protein</shortName>
    </recommendedName>
</protein>